<evidence type="ECO:0000255" key="1">
    <source>
        <dbReference type="HAMAP-Rule" id="MF_00600"/>
    </source>
</evidence>
<evidence type="ECO:0000305" key="2"/>
<feature type="chain" id="PRO_0000063268" description="Chaperonin GroEL">
    <location>
        <begin position="1"/>
        <end position="544"/>
    </location>
</feature>
<feature type="binding site" evidence="1">
    <location>
        <begin position="29"/>
        <end position="32"/>
    </location>
    <ligand>
        <name>ATP</name>
        <dbReference type="ChEBI" id="CHEBI:30616"/>
    </ligand>
</feature>
<feature type="binding site" evidence="1">
    <location>
        <begin position="86"/>
        <end position="90"/>
    </location>
    <ligand>
        <name>ATP</name>
        <dbReference type="ChEBI" id="CHEBI:30616"/>
    </ligand>
</feature>
<feature type="binding site" evidence="1">
    <location>
        <position position="413"/>
    </location>
    <ligand>
        <name>ATP</name>
        <dbReference type="ChEBI" id="CHEBI:30616"/>
    </ligand>
</feature>
<feature type="binding site" evidence="1">
    <location>
        <begin position="476"/>
        <end position="478"/>
    </location>
    <ligand>
        <name>ATP</name>
        <dbReference type="ChEBI" id="CHEBI:30616"/>
    </ligand>
</feature>
<feature type="binding site" evidence="1">
    <location>
        <position position="492"/>
    </location>
    <ligand>
        <name>ATP</name>
        <dbReference type="ChEBI" id="CHEBI:30616"/>
    </ligand>
</feature>
<dbReference type="EC" id="5.6.1.7" evidence="1"/>
<dbReference type="EMBL" id="AE017194">
    <property type="protein sequence ID" value="AAS39225.1"/>
    <property type="status" value="ALT_FRAME"/>
    <property type="molecule type" value="Genomic_DNA"/>
</dbReference>
<dbReference type="EMBL" id="AE017194">
    <property type="protein sequence ID" value="AAS39226.1"/>
    <property type="status" value="ALT_FRAME"/>
    <property type="molecule type" value="Genomic_DNA"/>
</dbReference>
<dbReference type="SMR" id="Q73ER9"/>
<dbReference type="KEGG" id="bca:BCE_0289"/>
<dbReference type="KEGG" id="bca:BCE_0290"/>
<dbReference type="HOGENOM" id="CLU_016503_6_0_9"/>
<dbReference type="Proteomes" id="UP000002527">
    <property type="component" value="Chromosome"/>
</dbReference>
<dbReference type="GO" id="GO:0005737">
    <property type="term" value="C:cytoplasm"/>
    <property type="evidence" value="ECO:0007669"/>
    <property type="project" value="UniProtKB-SubCell"/>
</dbReference>
<dbReference type="GO" id="GO:0005524">
    <property type="term" value="F:ATP binding"/>
    <property type="evidence" value="ECO:0007669"/>
    <property type="project" value="UniProtKB-UniRule"/>
</dbReference>
<dbReference type="GO" id="GO:0140662">
    <property type="term" value="F:ATP-dependent protein folding chaperone"/>
    <property type="evidence" value="ECO:0007669"/>
    <property type="project" value="InterPro"/>
</dbReference>
<dbReference type="GO" id="GO:0016853">
    <property type="term" value="F:isomerase activity"/>
    <property type="evidence" value="ECO:0007669"/>
    <property type="project" value="UniProtKB-KW"/>
</dbReference>
<dbReference type="GO" id="GO:0051082">
    <property type="term" value="F:unfolded protein binding"/>
    <property type="evidence" value="ECO:0007669"/>
    <property type="project" value="UniProtKB-UniRule"/>
</dbReference>
<dbReference type="GO" id="GO:0042026">
    <property type="term" value="P:protein refolding"/>
    <property type="evidence" value="ECO:0007669"/>
    <property type="project" value="UniProtKB-UniRule"/>
</dbReference>
<dbReference type="CDD" id="cd03344">
    <property type="entry name" value="GroEL"/>
    <property type="match status" value="1"/>
</dbReference>
<dbReference type="FunFam" id="1.10.560.10:FF:000001">
    <property type="entry name" value="60 kDa chaperonin"/>
    <property type="match status" value="1"/>
</dbReference>
<dbReference type="FunFam" id="3.50.7.10:FF:000001">
    <property type="entry name" value="60 kDa chaperonin"/>
    <property type="match status" value="1"/>
</dbReference>
<dbReference type="Gene3D" id="3.50.7.10">
    <property type="entry name" value="GroEL"/>
    <property type="match status" value="1"/>
</dbReference>
<dbReference type="Gene3D" id="1.10.560.10">
    <property type="entry name" value="GroEL-like equatorial domain"/>
    <property type="match status" value="1"/>
</dbReference>
<dbReference type="Gene3D" id="3.30.260.10">
    <property type="entry name" value="TCP-1-like chaperonin intermediate domain"/>
    <property type="match status" value="1"/>
</dbReference>
<dbReference type="HAMAP" id="MF_00600">
    <property type="entry name" value="CH60"/>
    <property type="match status" value="1"/>
</dbReference>
<dbReference type="InterPro" id="IPR018370">
    <property type="entry name" value="Chaperonin_Cpn60_CS"/>
</dbReference>
<dbReference type="InterPro" id="IPR001844">
    <property type="entry name" value="Cpn60/GroEL"/>
</dbReference>
<dbReference type="InterPro" id="IPR002423">
    <property type="entry name" value="Cpn60/GroEL/TCP-1"/>
</dbReference>
<dbReference type="InterPro" id="IPR027409">
    <property type="entry name" value="GroEL-like_apical_dom_sf"/>
</dbReference>
<dbReference type="InterPro" id="IPR027413">
    <property type="entry name" value="GROEL-like_equatorial_sf"/>
</dbReference>
<dbReference type="InterPro" id="IPR027410">
    <property type="entry name" value="TCP-1-like_intermed_sf"/>
</dbReference>
<dbReference type="NCBIfam" id="TIGR02348">
    <property type="entry name" value="GroEL"/>
    <property type="match status" value="1"/>
</dbReference>
<dbReference type="NCBIfam" id="NF000592">
    <property type="entry name" value="PRK00013.1"/>
    <property type="match status" value="1"/>
</dbReference>
<dbReference type="NCBIfam" id="NF009487">
    <property type="entry name" value="PRK12849.1"/>
    <property type="match status" value="1"/>
</dbReference>
<dbReference type="NCBIfam" id="NF009488">
    <property type="entry name" value="PRK12850.1"/>
    <property type="match status" value="1"/>
</dbReference>
<dbReference type="NCBIfam" id="NF009489">
    <property type="entry name" value="PRK12851.1"/>
    <property type="match status" value="1"/>
</dbReference>
<dbReference type="PANTHER" id="PTHR45633">
    <property type="entry name" value="60 KDA HEAT SHOCK PROTEIN, MITOCHONDRIAL"/>
    <property type="match status" value="1"/>
</dbReference>
<dbReference type="Pfam" id="PF00118">
    <property type="entry name" value="Cpn60_TCP1"/>
    <property type="match status" value="1"/>
</dbReference>
<dbReference type="PRINTS" id="PR00298">
    <property type="entry name" value="CHAPERONIN60"/>
</dbReference>
<dbReference type="SUPFAM" id="SSF52029">
    <property type="entry name" value="GroEL apical domain-like"/>
    <property type="match status" value="1"/>
</dbReference>
<dbReference type="SUPFAM" id="SSF48592">
    <property type="entry name" value="GroEL equatorial domain-like"/>
    <property type="match status" value="1"/>
</dbReference>
<dbReference type="SUPFAM" id="SSF54849">
    <property type="entry name" value="GroEL-intermediate domain like"/>
    <property type="match status" value="1"/>
</dbReference>
<dbReference type="PROSITE" id="PS00296">
    <property type="entry name" value="CHAPERONINS_CPN60"/>
    <property type="match status" value="1"/>
</dbReference>
<name>CH60_BACC1</name>
<keyword id="KW-0067">ATP-binding</keyword>
<keyword id="KW-0143">Chaperone</keyword>
<keyword id="KW-0963">Cytoplasm</keyword>
<keyword id="KW-0413">Isomerase</keyword>
<keyword id="KW-0547">Nucleotide-binding</keyword>
<organism>
    <name type="scientific">Bacillus cereus (strain ATCC 10987 / NRS 248)</name>
    <dbReference type="NCBI Taxonomy" id="222523"/>
    <lineage>
        <taxon>Bacteria</taxon>
        <taxon>Bacillati</taxon>
        <taxon>Bacillota</taxon>
        <taxon>Bacilli</taxon>
        <taxon>Bacillales</taxon>
        <taxon>Bacillaceae</taxon>
        <taxon>Bacillus</taxon>
        <taxon>Bacillus cereus group</taxon>
    </lineage>
</organism>
<proteinExistence type="inferred from homology"/>
<protein>
    <recommendedName>
        <fullName evidence="1">Chaperonin GroEL</fullName>
        <ecNumber evidence="1">5.6.1.7</ecNumber>
    </recommendedName>
    <alternativeName>
        <fullName evidence="1">60 kDa chaperonin</fullName>
    </alternativeName>
    <alternativeName>
        <fullName evidence="1">Chaperonin-60</fullName>
        <shortName evidence="1">Cpn60</shortName>
    </alternativeName>
</protein>
<sequence>MAKDIKFSEEARRSMLRGVDTLANAVKVTLGPKGRNVVLEKKFGSPLITNDGVTIAKEIELEDAFENMGAKLVAEVASKTNDVAGDGTTTATVLAQAMIREGLKNVTAGANPMGLRKGIEKAVVAAVEELKTISKPIEGKSSIAQVAAISAADEEVGQLIAEAMERVGNDGVITLEESKGFTTELDVVEGMQFDRGYASPYMITDSDKMEAVLDNPYILITDKKISNIQEILPVLEQVVQQGKPLLIIAEDVEGEALATLVVNKLRGTFNVVAVKAPGFGDRRKAMLEDIAILTGGEVITEELGRDLKSATVESLGRAGKVVVTKENTTVVEGVGSTEQIEARIGQIRAQLEETTSEFDREKLQERLAKLAGGVAVIKVGAATETELKERKLRIEDALNSTRAAVEEGIVAGGGTSLMNVYTKVASIVAEGDEATGINIVLRALEEPVRQIAINAGLEGSVVVERLKGEKVGVGFNAATGEWVNMLETGIVDPAKVTRSALQNAASVAAMFLTTEAVVADKPEPNAPAMPDMGGMGMGGMGGMM</sequence>
<reference key="1">
    <citation type="journal article" date="2004" name="Nucleic Acids Res.">
        <title>The genome sequence of Bacillus cereus ATCC 10987 reveals metabolic adaptations and a large plasmid related to Bacillus anthracis pXO1.</title>
        <authorList>
            <person name="Rasko D.A."/>
            <person name="Ravel J."/>
            <person name="Oekstad O.A."/>
            <person name="Helgason E."/>
            <person name="Cer R.Z."/>
            <person name="Jiang L."/>
            <person name="Shores K.A."/>
            <person name="Fouts D.E."/>
            <person name="Tourasse N.J."/>
            <person name="Angiuoli S.V."/>
            <person name="Kolonay J.F."/>
            <person name="Nelson W.C."/>
            <person name="Kolstoe A.-B."/>
            <person name="Fraser C.M."/>
            <person name="Read T.D."/>
        </authorList>
    </citation>
    <scope>NUCLEOTIDE SEQUENCE [LARGE SCALE GENOMIC DNA]</scope>
    <source>
        <strain>ATCC 10987 / NRS 248</strain>
    </source>
</reference>
<accession>Q73ER9</accession>
<accession>Q73ER8</accession>
<comment type="function">
    <text evidence="1">Together with its co-chaperonin GroES, plays an essential role in assisting protein folding. The GroEL-GroES system forms a nano-cage that allows encapsulation of the non-native substrate proteins and provides a physical environment optimized to promote and accelerate protein folding.</text>
</comment>
<comment type="catalytic activity">
    <reaction evidence="1">
        <text>ATP + H2O + a folded polypeptide = ADP + phosphate + an unfolded polypeptide.</text>
        <dbReference type="EC" id="5.6.1.7"/>
    </reaction>
</comment>
<comment type="subunit">
    <text evidence="1">Forms a cylinder of 14 subunits composed of two heptameric rings stacked back-to-back. Interacts with the co-chaperonin GroES.</text>
</comment>
<comment type="subcellular location">
    <subcellularLocation>
        <location evidence="1">Cytoplasm</location>
    </subcellularLocation>
</comment>
<comment type="similarity">
    <text evidence="1">Belongs to the chaperonin (HSP60) family.</text>
</comment>
<comment type="sequence caution" evidence="2">
    <conflict type="frameshift">
        <sequence resource="EMBL-CDS" id="AAS39225"/>
    </conflict>
    <text>Produces two separate ORFs.</text>
</comment>
<comment type="sequence caution" evidence="2">
    <conflict type="frameshift">
        <sequence resource="EMBL-CDS" id="AAS39226"/>
    </conflict>
    <text>Produces two separate ORFs.</text>
</comment>
<gene>
    <name evidence="1" type="primary">groEL</name>
    <name evidence="1" type="synonym">groL</name>
    <name type="ordered locus">BCE_0289/BCE_0290</name>
</gene>